<sequence length="22" mass="2607">MEFVAKLFKFFKDLLGKFLGNN</sequence>
<protein>
    <recommendedName>
        <fullName>Phenol-soluble modulin alpha 3 peptide</fullName>
    </recommendedName>
</protein>
<reference key="1">
    <citation type="journal article" date="2008" name="Antimicrob. Agents Chemother.">
        <title>Mutated response regulator graR is responsible for phenotypic conversion of Staphylococcus aureus from heterogeneous vancomycin-intermediate resistance to vancomycin-intermediate resistance.</title>
        <authorList>
            <person name="Neoh H.-M."/>
            <person name="Cui L."/>
            <person name="Yuzawa H."/>
            <person name="Takeuchi F."/>
            <person name="Matsuo M."/>
            <person name="Hiramatsu K."/>
        </authorList>
    </citation>
    <scope>NUCLEOTIDE SEQUENCE [LARGE SCALE GENOMIC DNA]</scope>
    <source>
        <strain>Mu3 / ATCC 700698</strain>
    </source>
</reference>
<name>PSMA3_STAA1</name>
<evidence type="ECO:0000250" key="1">
    <source>
        <dbReference type="UniProtKB" id="A9JX07"/>
    </source>
</evidence>
<evidence type="ECO:0000305" key="2"/>
<feature type="peptide" id="PRO_0000345057" description="Phenol-soluble modulin alpha 3 peptide">
    <location>
        <begin position="1"/>
        <end position="22"/>
    </location>
</feature>
<comment type="function">
    <text evidence="1">Peptide which can recruit, activate and subsequently lyse human neutrophils, thus eliminating the main cellular defense against infection.</text>
</comment>
<comment type="similarity">
    <text evidence="2">Belongs to the phenol-soluble modulin alpha peptides family.</text>
</comment>
<dbReference type="EMBL" id="AP009324">
    <property type="status" value="NOT_ANNOTATED_CDS"/>
    <property type="molecule type" value="Genomic_DNA"/>
</dbReference>
<dbReference type="RefSeq" id="WP_014373779.1">
    <property type="nucleotide sequence ID" value="NZ_CTYB01000045.1"/>
</dbReference>
<dbReference type="SMR" id="P0C802"/>
<dbReference type="GO" id="GO:0031640">
    <property type="term" value="P:killing of cells of another organism"/>
    <property type="evidence" value="ECO:0007669"/>
    <property type="project" value="UniProtKB-KW"/>
</dbReference>
<dbReference type="InterPro" id="IPR031429">
    <property type="entry name" value="PSM_alpha"/>
</dbReference>
<dbReference type="InterPro" id="IPR053383">
    <property type="entry name" value="PSM_alpha_peptides"/>
</dbReference>
<dbReference type="NCBIfam" id="NF033426">
    <property type="entry name" value="PSM_alpha_3"/>
    <property type="match status" value="1"/>
</dbReference>
<dbReference type="Pfam" id="PF17063">
    <property type="entry name" value="PSMalpha"/>
    <property type="match status" value="1"/>
</dbReference>
<gene>
    <name type="primary">psmA3</name>
    <name type="ordered locus">SAHV_0449.2</name>
</gene>
<proteinExistence type="inferred from homology"/>
<organism>
    <name type="scientific">Staphylococcus aureus (strain Mu3 / ATCC 700698)</name>
    <dbReference type="NCBI Taxonomy" id="418127"/>
    <lineage>
        <taxon>Bacteria</taxon>
        <taxon>Bacillati</taxon>
        <taxon>Bacillota</taxon>
        <taxon>Bacilli</taxon>
        <taxon>Bacillales</taxon>
        <taxon>Staphylococcaceae</taxon>
        <taxon>Staphylococcus</taxon>
    </lineage>
</organism>
<keyword id="KW-0204">Cytolysis</keyword>
<keyword id="KW-0843">Virulence</keyword>
<accession>P0C802</accession>